<protein>
    <recommendedName>
        <fullName evidence="1">Ribose-5-phosphate isomerase A</fullName>
        <ecNumber evidence="1">5.3.1.6</ecNumber>
    </recommendedName>
    <alternativeName>
        <fullName evidence="1">Phosphoriboisomerase A</fullName>
        <shortName evidence="1">PRI</shortName>
    </alternativeName>
</protein>
<name>RPIA_PROMA</name>
<keyword id="KW-0413">Isomerase</keyword>
<keyword id="KW-1185">Reference proteome</keyword>
<proteinExistence type="inferred from homology"/>
<organism>
    <name type="scientific">Prochlorococcus marinus (strain SARG / CCMP1375 / SS120)</name>
    <dbReference type="NCBI Taxonomy" id="167539"/>
    <lineage>
        <taxon>Bacteria</taxon>
        <taxon>Bacillati</taxon>
        <taxon>Cyanobacteriota</taxon>
        <taxon>Cyanophyceae</taxon>
        <taxon>Synechococcales</taxon>
        <taxon>Prochlorococcaceae</taxon>
        <taxon>Prochlorococcus</taxon>
    </lineage>
</organism>
<dbReference type="EC" id="5.3.1.6" evidence="1"/>
<dbReference type="EMBL" id="AE017126">
    <property type="protein sequence ID" value="AAQ00688.1"/>
    <property type="molecule type" value="Genomic_DNA"/>
</dbReference>
<dbReference type="RefSeq" id="NP_876035.1">
    <property type="nucleotide sequence ID" value="NC_005042.1"/>
</dbReference>
<dbReference type="RefSeq" id="WP_011125794.1">
    <property type="nucleotide sequence ID" value="NC_005042.1"/>
</dbReference>
<dbReference type="SMR" id="Q7VA25"/>
<dbReference type="STRING" id="167539.Pro_1644"/>
<dbReference type="EnsemblBacteria" id="AAQ00688">
    <property type="protein sequence ID" value="AAQ00688"/>
    <property type="gene ID" value="Pro_1644"/>
</dbReference>
<dbReference type="KEGG" id="pma:Pro_1644"/>
<dbReference type="PATRIC" id="fig|167539.5.peg.1739"/>
<dbReference type="eggNOG" id="COG0120">
    <property type="taxonomic scope" value="Bacteria"/>
</dbReference>
<dbReference type="HOGENOM" id="CLU_056590_1_1_3"/>
<dbReference type="OrthoDB" id="5870696at2"/>
<dbReference type="UniPathway" id="UPA00115">
    <property type="reaction ID" value="UER00412"/>
</dbReference>
<dbReference type="Proteomes" id="UP000001420">
    <property type="component" value="Chromosome"/>
</dbReference>
<dbReference type="GO" id="GO:0005829">
    <property type="term" value="C:cytosol"/>
    <property type="evidence" value="ECO:0007669"/>
    <property type="project" value="TreeGrafter"/>
</dbReference>
<dbReference type="GO" id="GO:0004751">
    <property type="term" value="F:ribose-5-phosphate isomerase activity"/>
    <property type="evidence" value="ECO:0007669"/>
    <property type="project" value="UniProtKB-UniRule"/>
</dbReference>
<dbReference type="GO" id="GO:0006014">
    <property type="term" value="P:D-ribose metabolic process"/>
    <property type="evidence" value="ECO:0007669"/>
    <property type="project" value="TreeGrafter"/>
</dbReference>
<dbReference type="GO" id="GO:0009052">
    <property type="term" value="P:pentose-phosphate shunt, non-oxidative branch"/>
    <property type="evidence" value="ECO:0007669"/>
    <property type="project" value="UniProtKB-UniRule"/>
</dbReference>
<dbReference type="CDD" id="cd01398">
    <property type="entry name" value="RPI_A"/>
    <property type="match status" value="1"/>
</dbReference>
<dbReference type="FunFam" id="3.30.70.260:FF:000018">
    <property type="entry name" value="Ribose-5-phosphate isomerase A"/>
    <property type="match status" value="1"/>
</dbReference>
<dbReference type="FunFam" id="3.40.50.1360:FF:000001">
    <property type="entry name" value="Ribose-5-phosphate isomerase A"/>
    <property type="match status" value="1"/>
</dbReference>
<dbReference type="Gene3D" id="3.30.70.260">
    <property type="match status" value="1"/>
</dbReference>
<dbReference type="Gene3D" id="3.40.50.1360">
    <property type="match status" value="1"/>
</dbReference>
<dbReference type="HAMAP" id="MF_00170">
    <property type="entry name" value="Rib_5P_isom_A"/>
    <property type="match status" value="1"/>
</dbReference>
<dbReference type="InterPro" id="IPR037171">
    <property type="entry name" value="NagB/RpiA_transferase-like"/>
</dbReference>
<dbReference type="InterPro" id="IPR020672">
    <property type="entry name" value="Ribose5P_isomerase_typA_subgr"/>
</dbReference>
<dbReference type="InterPro" id="IPR004788">
    <property type="entry name" value="Ribose5P_isomerase_type_A"/>
</dbReference>
<dbReference type="NCBIfam" id="NF001924">
    <property type="entry name" value="PRK00702.1"/>
    <property type="match status" value="1"/>
</dbReference>
<dbReference type="NCBIfam" id="TIGR00021">
    <property type="entry name" value="rpiA"/>
    <property type="match status" value="1"/>
</dbReference>
<dbReference type="PANTHER" id="PTHR11934">
    <property type="entry name" value="RIBOSE-5-PHOSPHATE ISOMERASE"/>
    <property type="match status" value="1"/>
</dbReference>
<dbReference type="PANTHER" id="PTHR11934:SF0">
    <property type="entry name" value="RIBOSE-5-PHOSPHATE ISOMERASE"/>
    <property type="match status" value="1"/>
</dbReference>
<dbReference type="Pfam" id="PF06026">
    <property type="entry name" value="Rib_5-P_isom_A"/>
    <property type="match status" value="1"/>
</dbReference>
<dbReference type="SUPFAM" id="SSF75445">
    <property type="entry name" value="D-ribose-5-phosphate isomerase (RpiA), lid domain"/>
    <property type="match status" value="1"/>
</dbReference>
<dbReference type="SUPFAM" id="SSF100950">
    <property type="entry name" value="NagB/RpiA/CoA transferase-like"/>
    <property type="match status" value="1"/>
</dbReference>
<evidence type="ECO:0000255" key="1">
    <source>
        <dbReference type="HAMAP-Rule" id="MF_00170"/>
    </source>
</evidence>
<reference key="1">
    <citation type="journal article" date="2003" name="Proc. Natl. Acad. Sci. U.S.A.">
        <title>Genome sequence of the cyanobacterium Prochlorococcus marinus SS120, a nearly minimal oxyphototrophic genome.</title>
        <authorList>
            <person name="Dufresne A."/>
            <person name="Salanoubat M."/>
            <person name="Partensky F."/>
            <person name="Artiguenave F."/>
            <person name="Axmann I.M."/>
            <person name="Barbe V."/>
            <person name="Duprat S."/>
            <person name="Galperin M.Y."/>
            <person name="Koonin E.V."/>
            <person name="Le Gall F."/>
            <person name="Makarova K.S."/>
            <person name="Ostrowski M."/>
            <person name="Oztas S."/>
            <person name="Robert C."/>
            <person name="Rogozin I.B."/>
            <person name="Scanlan D.J."/>
            <person name="Tandeau de Marsac N."/>
            <person name="Weissenbach J."/>
            <person name="Wincker P."/>
            <person name="Wolf Y.I."/>
            <person name="Hess W.R."/>
        </authorList>
    </citation>
    <scope>NUCLEOTIDE SEQUENCE [LARGE SCALE GENOMIC DNA]</scope>
    <source>
        <strain>SARG / CCMP1375 / SS120</strain>
    </source>
</reference>
<comment type="function">
    <text evidence="1">Catalyzes the reversible conversion of ribose-5-phosphate to ribulose 5-phosphate.</text>
</comment>
<comment type="catalytic activity">
    <reaction evidence="1">
        <text>aldehydo-D-ribose 5-phosphate = D-ribulose 5-phosphate</text>
        <dbReference type="Rhea" id="RHEA:14657"/>
        <dbReference type="ChEBI" id="CHEBI:58121"/>
        <dbReference type="ChEBI" id="CHEBI:58273"/>
        <dbReference type="EC" id="5.3.1.6"/>
    </reaction>
</comment>
<comment type="pathway">
    <text evidence="1">Carbohydrate degradation; pentose phosphate pathway; D-ribose 5-phosphate from D-ribulose 5-phosphate (non-oxidative stage): step 1/1.</text>
</comment>
<comment type="subunit">
    <text evidence="1">Homodimer.</text>
</comment>
<comment type="similarity">
    <text evidence="1">Belongs to the ribose 5-phosphate isomerase family.</text>
</comment>
<feature type="chain" id="PRO_0000158447" description="Ribose-5-phosphate isomerase A">
    <location>
        <begin position="1"/>
        <end position="237"/>
    </location>
</feature>
<feature type="active site" description="Proton acceptor" evidence="1">
    <location>
        <position position="109"/>
    </location>
</feature>
<feature type="binding site" evidence="1">
    <location>
        <begin position="30"/>
        <end position="33"/>
    </location>
    <ligand>
        <name>substrate</name>
    </ligand>
</feature>
<feature type="binding site" evidence="1">
    <location>
        <begin position="87"/>
        <end position="90"/>
    </location>
    <ligand>
        <name>substrate</name>
    </ligand>
</feature>
<feature type="binding site" evidence="1">
    <location>
        <begin position="100"/>
        <end position="103"/>
    </location>
    <ligand>
        <name>substrate</name>
    </ligand>
</feature>
<feature type="binding site" evidence="1">
    <location>
        <position position="127"/>
    </location>
    <ligand>
        <name>substrate</name>
    </ligand>
</feature>
<sequence length="237" mass="25273">MTDLQTQMKIAVAQEAIGEIKDGMILGLGSGSTAALMIKSLGEKLKEGSLKEIIGVPTSFQGEVLASQLGIPLRAFSAVSKIDLAIDGADEVDPNFQLIKGGGACHVQEKLVASIADRFVVVVDSTKIVEKLNLEFKLPVEVLPAAWKLVQKELNDLGAKSDLRMAEKKAGPIVTDQGNLVLDVQFADGISDPQNLEKQINNFPGVLENGLFVNLTDEVLVGEIKNGVSSVNRLKKA</sequence>
<accession>Q7VA25</accession>
<gene>
    <name evidence="1" type="primary">rpiA</name>
    <name type="ordered locus">Pro_1644</name>
</gene>